<gene>
    <name evidence="1" type="primary">tusB</name>
    <name type="ordered locus">YpsIP31758_3922</name>
</gene>
<comment type="function">
    <text evidence="1">Part of a sulfur-relay system required for 2-thiolation of 5-methylaminomethyl-2-thiouridine (mnm(5)s(2)U) at tRNA wobble positions.</text>
</comment>
<comment type="subunit">
    <text evidence="1">Heterohexamer, formed by a dimer of trimers. The hexameric TusBCD complex contains 2 copies each of TusB, TusC and TusD. The TusBCD complex interacts with TusE.</text>
</comment>
<comment type="subcellular location">
    <subcellularLocation>
        <location evidence="1">Cytoplasm</location>
    </subcellularLocation>
</comment>
<comment type="similarity">
    <text evidence="1">Belongs to the DsrH/TusB family.</text>
</comment>
<organism>
    <name type="scientific">Yersinia pseudotuberculosis serotype O:1b (strain IP 31758)</name>
    <dbReference type="NCBI Taxonomy" id="349747"/>
    <lineage>
        <taxon>Bacteria</taxon>
        <taxon>Pseudomonadati</taxon>
        <taxon>Pseudomonadota</taxon>
        <taxon>Gammaproteobacteria</taxon>
        <taxon>Enterobacterales</taxon>
        <taxon>Yersiniaceae</taxon>
        <taxon>Yersinia</taxon>
    </lineage>
</organism>
<evidence type="ECO:0000255" key="1">
    <source>
        <dbReference type="HAMAP-Rule" id="MF_01564"/>
    </source>
</evidence>
<reference key="1">
    <citation type="journal article" date="2007" name="PLoS Genet.">
        <title>The complete genome sequence of Yersinia pseudotuberculosis IP31758, the causative agent of Far East scarlet-like fever.</title>
        <authorList>
            <person name="Eppinger M."/>
            <person name="Rosovitz M.J."/>
            <person name="Fricke W.F."/>
            <person name="Rasko D.A."/>
            <person name="Kokorina G."/>
            <person name="Fayolle C."/>
            <person name="Lindler L.E."/>
            <person name="Carniel E."/>
            <person name="Ravel J."/>
        </authorList>
    </citation>
    <scope>NUCLEOTIDE SEQUENCE [LARGE SCALE GENOMIC DNA]</scope>
    <source>
        <strain>IP 31758</strain>
    </source>
</reference>
<name>TUSB_YERP3</name>
<accession>A7FNP2</accession>
<dbReference type="EMBL" id="CP000720">
    <property type="protein sequence ID" value="ABS48045.1"/>
    <property type="molecule type" value="Genomic_DNA"/>
</dbReference>
<dbReference type="RefSeq" id="WP_002212322.1">
    <property type="nucleotide sequence ID" value="NC_009708.1"/>
</dbReference>
<dbReference type="SMR" id="A7FNP2"/>
<dbReference type="GeneID" id="57974404"/>
<dbReference type="KEGG" id="ypi:YpsIP31758_3922"/>
<dbReference type="HOGENOM" id="CLU_166087_2_1_6"/>
<dbReference type="Proteomes" id="UP000002412">
    <property type="component" value="Chromosome"/>
</dbReference>
<dbReference type="GO" id="GO:1990228">
    <property type="term" value="C:sulfurtransferase complex"/>
    <property type="evidence" value="ECO:0007669"/>
    <property type="project" value="TreeGrafter"/>
</dbReference>
<dbReference type="GO" id="GO:0002143">
    <property type="term" value="P:tRNA wobble position uridine thiolation"/>
    <property type="evidence" value="ECO:0007669"/>
    <property type="project" value="InterPro"/>
</dbReference>
<dbReference type="FunFam" id="3.40.1260.10:FF:000002">
    <property type="entry name" value="Sulfurtransferase TusB"/>
    <property type="match status" value="1"/>
</dbReference>
<dbReference type="Gene3D" id="3.40.1260.10">
    <property type="entry name" value="DsrEFH-like"/>
    <property type="match status" value="1"/>
</dbReference>
<dbReference type="HAMAP" id="MF_01564">
    <property type="entry name" value="Thiourid_synth_B"/>
    <property type="match status" value="1"/>
</dbReference>
<dbReference type="InterPro" id="IPR027396">
    <property type="entry name" value="DsrEFH-like"/>
</dbReference>
<dbReference type="InterPro" id="IPR023526">
    <property type="entry name" value="Sulphur_relay_TusB"/>
</dbReference>
<dbReference type="InterPro" id="IPR007215">
    <property type="entry name" value="Sulphur_relay_TusB/DsrH"/>
</dbReference>
<dbReference type="NCBIfam" id="NF010035">
    <property type="entry name" value="PRK13510.1"/>
    <property type="match status" value="1"/>
</dbReference>
<dbReference type="NCBIfam" id="TIGR03011">
    <property type="entry name" value="sulf_tusB_dsrH"/>
    <property type="match status" value="1"/>
</dbReference>
<dbReference type="PANTHER" id="PTHR37526">
    <property type="entry name" value="PROTEIN TUSB"/>
    <property type="match status" value="1"/>
</dbReference>
<dbReference type="PANTHER" id="PTHR37526:SF1">
    <property type="entry name" value="PROTEIN TUSB"/>
    <property type="match status" value="1"/>
</dbReference>
<dbReference type="Pfam" id="PF04077">
    <property type="entry name" value="DsrH"/>
    <property type="match status" value="1"/>
</dbReference>
<dbReference type="SUPFAM" id="SSF75169">
    <property type="entry name" value="DsrEFH-like"/>
    <property type="match status" value="1"/>
</dbReference>
<feature type="chain" id="PRO_1000069063" description="Protein TusB">
    <location>
        <begin position="1"/>
        <end position="95"/>
    </location>
</feature>
<protein>
    <recommendedName>
        <fullName evidence="1">Protein TusB</fullName>
    </recommendedName>
    <alternativeName>
        <fullName evidence="1">tRNA 2-thiouridine synthesizing protein B</fullName>
    </alternativeName>
</protein>
<sequence length="95" mass="10577">MLYTVSHSPYHCDLSALLRLATSEDDILLLQDGVIAALKESETLKLLLNNPASLFVLEDDVIARGLVGQISDNATLISYTHFVDLTLRHQQQLAW</sequence>
<keyword id="KW-0963">Cytoplasm</keyword>
<keyword id="KW-0819">tRNA processing</keyword>
<proteinExistence type="inferred from homology"/>